<protein>
    <recommendedName>
        <fullName>Nidogen-2</fullName>
        <shortName>NID-2</shortName>
    </recommendedName>
    <alternativeName>
        <fullName>Entactin-2</fullName>
    </alternativeName>
</protein>
<name>NID2_MOUSE</name>
<feature type="signal peptide" evidence="1">
    <location>
        <begin position="1"/>
        <end position="30"/>
    </location>
</feature>
<feature type="chain" id="PRO_0000007672" description="Nidogen-2">
    <location>
        <begin position="31"/>
        <end position="1403"/>
    </location>
</feature>
<feature type="domain" description="NIDO" evidence="7">
    <location>
        <begin position="108"/>
        <end position="274"/>
    </location>
</feature>
<feature type="domain" description="EGF-like 1" evidence="4">
    <location>
        <begin position="507"/>
        <end position="547"/>
    </location>
</feature>
<feature type="domain" description="Nidogen G2 beta-barrel" evidence="5">
    <location>
        <begin position="551"/>
        <end position="781"/>
    </location>
</feature>
<feature type="domain" description="EGF-like 2" evidence="4">
    <location>
        <begin position="782"/>
        <end position="823"/>
    </location>
</feature>
<feature type="domain" description="EGF-like 3; calcium-binding" evidence="4">
    <location>
        <begin position="824"/>
        <end position="862"/>
    </location>
</feature>
<feature type="domain" description="EGF-like 4" evidence="4">
    <location>
        <begin position="871"/>
        <end position="914"/>
    </location>
</feature>
<feature type="domain" description="EGF-like 5; calcium-binding" evidence="4">
    <location>
        <begin position="915"/>
        <end position="953"/>
    </location>
</feature>
<feature type="domain" description="Thyroglobulin type-1 1" evidence="6">
    <location>
        <begin position="965"/>
        <end position="1033"/>
    </location>
</feature>
<feature type="domain" description="Thyroglobulin type-1 2" evidence="6">
    <location>
        <begin position="1044"/>
        <end position="1112"/>
    </location>
</feature>
<feature type="repeat" description="LDL-receptor class B 1">
    <location>
        <begin position="1182"/>
        <end position="1225"/>
    </location>
</feature>
<feature type="repeat" description="LDL-receptor class B 2">
    <location>
        <begin position="1226"/>
        <end position="1268"/>
    </location>
</feature>
<feature type="repeat" description="LDL-receptor class B 3">
    <location>
        <begin position="1269"/>
        <end position="1313"/>
    </location>
</feature>
<feature type="repeat" description="LDL-receptor class B 4">
    <location>
        <begin position="1314"/>
        <end position="1355"/>
    </location>
</feature>
<feature type="repeat" description="LDL-receptor class B 5">
    <location>
        <begin position="1357"/>
        <end position="1401"/>
    </location>
</feature>
<feature type="region of interest" description="Disordered" evidence="8">
    <location>
        <begin position="323"/>
        <end position="403"/>
    </location>
</feature>
<feature type="region of interest" description="Disordered" evidence="8">
    <location>
        <begin position="1021"/>
        <end position="1043"/>
    </location>
</feature>
<feature type="short sequence motif" description="Cell attachment site">
    <location>
        <begin position="946"/>
        <end position="948"/>
    </location>
</feature>
<feature type="compositionally biased region" description="Polar residues" evidence="8">
    <location>
        <begin position="386"/>
        <end position="395"/>
    </location>
</feature>
<feature type="compositionally biased region" description="Pro residues" evidence="8">
    <location>
        <begin position="1027"/>
        <end position="1040"/>
    </location>
</feature>
<feature type="modified residue" description="Omega-N-methylarginine" evidence="12">
    <location>
        <position position="1336"/>
    </location>
</feature>
<feature type="glycosylation site" description="O-linked (Xyl...) (chondroitin sulfate) serine" evidence="3">
    <location>
        <position position="386"/>
    </location>
</feature>
<feature type="glycosylation site" description="O-linked (Xyl...) (chondroitin sulfate) serine" evidence="2">
    <location>
        <position position="475"/>
    </location>
</feature>
<feature type="glycosylation site" description="N-linked (GlcNAc...) asparagine" evidence="10">
    <location>
        <position position="681"/>
    </location>
</feature>
<feature type="glycosylation site" description="N-linked (GlcNAc...) asparagine" evidence="3">
    <location>
        <position position="716"/>
    </location>
</feature>
<feature type="glycosylation site" description="N-linked (GlcNAc...) asparagine" evidence="3">
    <location>
        <position position="726"/>
    </location>
</feature>
<feature type="glycosylation site" description="N-linked (GlcNAc...) asparagine" evidence="3">
    <location>
        <position position="1152"/>
    </location>
</feature>
<feature type="disulfide bond" evidence="1">
    <location>
        <begin position="511"/>
        <end position="524"/>
    </location>
</feature>
<feature type="disulfide bond" evidence="1">
    <location>
        <begin position="518"/>
        <end position="533"/>
    </location>
</feature>
<feature type="disulfide bond" evidence="1">
    <location>
        <begin position="535"/>
        <end position="546"/>
    </location>
</feature>
<feature type="disulfide bond" evidence="1">
    <location>
        <begin position="786"/>
        <end position="799"/>
    </location>
</feature>
<feature type="disulfide bond" evidence="1">
    <location>
        <begin position="793"/>
        <end position="809"/>
    </location>
</feature>
<feature type="disulfide bond" evidence="1">
    <location>
        <begin position="811"/>
        <end position="822"/>
    </location>
</feature>
<feature type="disulfide bond" evidence="1">
    <location>
        <begin position="828"/>
        <end position="841"/>
    </location>
</feature>
<feature type="disulfide bond" evidence="1">
    <location>
        <begin position="835"/>
        <end position="850"/>
    </location>
</feature>
<feature type="disulfide bond" evidence="1">
    <location>
        <begin position="852"/>
        <end position="865"/>
    </location>
</feature>
<feature type="disulfide bond" evidence="1">
    <location>
        <begin position="875"/>
        <end position="890"/>
    </location>
</feature>
<feature type="disulfide bond" evidence="1">
    <location>
        <begin position="882"/>
        <end position="900"/>
    </location>
</feature>
<feature type="disulfide bond" evidence="1">
    <location>
        <begin position="902"/>
        <end position="913"/>
    </location>
</feature>
<feature type="disulfide bond" evidence="1">
    <location>
        <begin position="919"/>
        <end position="930"/>
    </location>
</feature>
<feature type="disulfide bond" evidence="1">
    <location>
        <begin position="924"/>
        <end position="939"/>
    </location>
</feature>
<feature type="disulfide bond" evidence="1">
    <location>
        <begin position="941"/>
        <end position="952"/>
    </location>
</feature>
<feature type="disulfide bond" evidence="1">
    <location>
        <begin position="968"/>
        <end position="991"/>
    </location>
</feature>
<feature type="disulfide bond" evidence="1">
    <location>
        <begin position="1002"/>
        <end position="1009"/>
    </location>
</feature>
<feature type="disulfide bond" evidence="1">
    <location>
        <begin position="1011"/>
        <end position="1033"/>
    </location>
</feature>
<feature type="disulfide bond" evidence="1">
    <location>
        <begin position="1047"/>
        <end position="1071"/>
    </location>
</feature>
<feature type="disulfide bond" evidence="1">
    <location>
        <begin position="1082"/>
        <end position="1089"/>
    </location>
</feature>
<feature type="disulfide bond" evidence="1">
    <location>
        <begin position="1091"/>
        <end position="1112"/>
    </location>
</feature>
<feature type="sequence conflict" description="In Ref. 1; BAA32609." evidence="11" ref="1">
    <original>L</original>
    <variation>F</variation>
    <location>
        <position position="197"/>
    </location>
</feature>
<feature type="sequence conflict" description="In Ref. 1; BAA32609." evidence="11" ref="1">
    <original>S</original>
    <variation>F</variation>
    <location>
        <position position="251"/>
    </location>
</feature>
<feature type="sequence conflict" description="In Ref. 1; BAA32609." evidence="11" ref="1">
    <original>A</original>
    <variation>V</variation>
    <location>
        <position position="367"/>
    </location>
</feature>
<feature type="sequence conflict" description="In Ref. 1; BAA32609." evidence="11" ref="1">
    <original>P</original>
    <variation>H</variation>
    <location>
        <position position="375"/>
    </location>
</feature>
<feature type="sequence conflict" description="In Ref. 1; BAA32609." evidence="11" ref="1">
    <original>S</original>
    <variation>W</variation>
    <location>
        <position position="386"/>
    </location>
</feature>
<feature type="sequence conflict" description="In Ref. 1; BAA32609." evidence="11" ref="1">
    <original>S</original>
    <variation>F</variation>
    <location>
        <position position="496"/>
    </location>
</feature>
<feature type="sequence conflict" description="In Ref. 1; BAA32609." evidence="11" ref="1">
    <original>R</original>
    <variation>C</variation>
    <location>
        <position position="651"/>
    </location>
</feature>
<feature type="sequence conflict" description="In Ref. 1; BAA32609." evidence="11" ref="1">
    <original>L</original>
    <variation>F</variation>
    <location>
        <position position="876"/>
    </location>
</feature>
<feature type="sequence conflict" description="In Ref. 1; BAA32609." evidence="11" ref="1">
    <original>L</original>
    <variation>F</variation>
    <location>
        <position position="1151"/>
    </location>
</feature>
<gene>
    <name type="primary">Nid2</name>
</gene>
<evidence type="ECO:0000250" key="1"/>
<evidence type="ECO:0000250" key="2">
    <source>
        <dbReference type="UniProtKB" id="Q14112"/>
    </source>
</evidence>
<evidence type="ECO:0000255" key="3"/>
<evidence type="ECO:0000255" key="4">
    <source>
        <dbReference type="PROSITE-ProRule" id="PRU00076"/>
    </source>
</evidence>
<evidence type="ECO:0000255" key="5">
    <source>
        <dbReference type="PROSITE-ProRule" id="PRU00348"/>
    </source>
</evidence>
<evidence type="ECO:0000255" key="6">
    <source>
        <dbReference type="PROSITE-ProRule" id="PRU00500"/>
    </source>
</evidence>
<evidence type="ECO:0000255" key="7">
    <source>
        <dbReference type="PROSITE-ProRule" id="PRU00570"/>
    </source>
</evidence>
<evidence type="ECO:0000256" key="8">
    <source>
        <dbReference type="SAM" id="MobiDB-lite"/>
    </source>
</evidence>
<evidence type="ECO:0000269" key="9">
    <source>
    </source>
</evidence>
<evidence type="ECO:0000269" key="10">
    <source>
    </source>
</evidence>
<evidence type="ECO:0000305" key="11"/>
<evidence type="ECO:0007744" key="12">
    <source>
    </source>
</evidence>
<keyword id="KW-0084">Basement membrane</keyword>
<keyword id="KW-0106">Calcium</keyword>
<keyword id="KW-0130">Cell adhesion</keyword>
<keyword id="KW-1015">Disulfide bond</keyword>
<keyword id="KW-0245">EGF-like domain</keyword>
<keyword id="KW-0272">Extracellular matrix</keyword>
<keyword id="KW-0325">Glycoprotein</keyword>
<keyword id="KW-0488">Methylation</keyword>
<keyword id="KW-0654">Proteoglycan</keyword>
<keyword id="KW-1185">Reference proteome</keyword>
<keyword id="KW-0677">Repeat</keyword>
<keyword id="KW-0964">Secreted</keyword>
<keyword id="KW-0732">Signal</keyword>
<accession>O88322</accession>
<accession>Q7TQF0</accession>
<proteinExistence type="evidence at protein level"/>
<sequence length="1403" mass="153913">MFRDPTAGWLTPPSPLSLLVMLLLLSRVGALRPDELFPYGESWGDQLLPEGDDESSAAVKLAIPLRFYDAQFSSLYVGTNGIISTQDFPRETQYVDDDFPTDFPAIAPFLADIDTSHSRGRILYREDTSGAVLSLAARYVRTGFPLSGSSFTPTHAFLATWEHVGAYEEVSRGAAPSGELNTFQAVLASDESDTYALFLYPANGLQFFGTRPKESYNVQLQLPARVGFCRGEADDLKREALYFSLTNTEQSVKNLYQLSNLGIPGVWAFHIGSRFALDNVRPATVGGDPSTARSSALEHPFSHAAALESYTEDSFHYYDENEEDVEYPPVEPGEAPEGHSRIDVSFNSKADPGLVDVGTSSPGSDRASPWPYPAPGNWPSYRETESASLDPQTKQGRPVGEGEVLDFRDPAELLDQMGTRAPAPPEADAALLTPVNEDLGGRNTQSYPEAGPVPSEPDVPVPPLEGEVLPHYPESGHVPPLRGGKYVIGLEDHVGSNDQVFTYNGANLETCEHSHGRCSQHAFCTDYTTGFCCHCQSRFYGNGKHCLPEGAPHRVNGKVSGRLRVGHIPVHFTDVDLHAYIVGNDGRAYTAISHVPQPAAQALLPVLPIGGLFGWLFALEKPGSENGFSLTGATFVHDVEVTFHPGEERVRITQTAEGLDPENYLSIKTNIEGQVPFIPANFTAHITPYKEFYHYRDSVVTSSSSRSFSLTSGSINQTWSYHIDQNITYQACRHAPRHLAIPATQQLTVDRAFALYSEDEGVLRFAVTNQIGPVEVDSAPVGVNPCYDGSHTCDTTARCHPGTGVDYTCECTPGFQGDGRSCVDVNECATGFHRCGPNSVCVNLVGSYRCECRSGYEFADDQHTCILIAPPPNPCLDGSHTCAPEGQARCIHHGGSSFSCACLPGFIGTGHQCSDVDECAENRCHEAAICYNTPGSFSCRCQPGYRGDGFHCTSDTVPEDSISGLKPCEYQQRYAQTQHAYPGSRIHIPQCDDQGNFVPLQCHGSTGFCWCVDRNGHEVPGTQTPPGSTPPHCGPPPEPTQRPRTVCERWRESLLEHYGGTPRDDQYVPQCDDLGHFIPLQCHGKSDFCWCVDKDGRELQGTRSQPGTRPACIPTVAPPVVRPTPRPDVTPPSVGTFLLYAQGQQIGHLPLNGSRLQKDAARTLLSLHGSIVVGIDYDCRERMVYWTDVAGRTISRASLEAGAEPETIITSGLISPEGLAIDHFRRTMYWTDSGLDKIERAELDGSERKVLFHTDLVNPRAITVDPIRGNLYWTDWNREAPKIETSSLDGENRRILINKDIGLPNGLTFDPFSKLLCWADAGTKKLECTLPDGTGRRVIQNHLNYPFSIVSYADHFYHTDWRRDGVISVNKDSGQFTDEFLPEQRSHLYGITAVYPYCPTGRK</sequence>
<comment type="function">
    <text>Cell adhesion glycoprotein. Might be involved in osteoblast differentiation. It probably has a role in cell-extracellular matrix interactions.</text>
</comment>
<comment type="subunit">
    <text evidence="1 9">Interacts with LAMA2. Interacts with COL13A1 (By similarity). Interacts with EFEMP2 (PubMed:17324935).</text>
</comment>
<comment type="subcellular location">
    <subcellularLocation>
        <location>Secreted</location>
        <location>Extracellular space</location>
        <location>Extracellular matrix</location>
        <location>Basement membrane</location>
    </subcellularLocation>
</comment>
<comment type="PTM">
    <text evidence="1">Highly N- and O-glycosylated.</text>
</comment>
<reference key="1">
    <citation type="journal article" date="1998" name="Exp. Cell Res.">
        <title>Entactin-2: a new member of basement membrane protein with high homology to entactin/nidogen.</title>
        <authorList>
            <person name="Kimura N."/>
            <person name="Toyoshima T."/>
            <person name="Kojima T."/>
            <person name="Shimane M."/>
        </authorList>
    </citation>
    <scope>NUCLEOTIDE SEQUENCE [MRNA]</scope>
</reference>
<reference key="2">
    <citation type="submission" date="2005-07" db="EMBL/GenBank/DDBJ databases">
        <authorList>
            <person name="Mural R.J."/>
            <person name="Adams M.D."/>
            <person name="Myers E.W."/>
            <person name="Smith H.O."/>
            <person name="Venter J.C."/>
        </authorList>
    </citation>
    <scope>NUCLEOTIDE SEQUENCE [LARGE SCALE GENOMIC DNA]</scope>
</reference>
<reference key="3">
    <citation type="journal article" date="2004" name="Genome Res.">
        <title>The status, quality, and expansion of the NIH full-length cDNA project: the Mammalian Gene Collection (MGC).</title>
        <authorList>
            <consortium name="The MGC Project Team"/>
        </authorList>
    </citation>
    <scope>NUCLEOTIDE SEQUENCE [LARGE SCALE MRNA]</scope>
    <source>
        <strain>C57BL/6J</strain>
        <tissue>Brain</tissue>
    </source>
</reference>
<reference key="4">
    <citation type="journal article" date="1999" name="EMBO J.">
        <title>Binding of the G domains of laminin alpha1 and alpha2 chains and perlecan to heparin, sulfatides, alpha-dystroglycan and several extracellular matrix proteins.</title>
        <authorList>
            <person name="Talts J.F."/>
            <person name="Andac Z."/>
            <person name="Goehring W."/>
            <person name="Brancaccio A."/>
            <person name="Timpl R."/>
        </authorList>
    </citation>
    <scope>INTERACTION WITH LAMA2</scope>
</reference>
<reference key="5">
    <citation type="journal article" date="2007" name="J. Biol. Chem.">
        <title>A comparative analysis of the fibulin protein family. Biochemical characterization, binding interactions, and tissue localization.</title>
        <authorList>
            <person name="Kobayashi N."/>
            <person name="Kostka G."/>
            <person name="Garbe J.H."/>
            <person name="Keene D.R."/>
            <person name="Baechinger H.P."/>
            <person name="Hanisch F.G."/>
            <person name="Markova D."/>
            <person name="Tsuda T."/>
            <person name="Timpl R."/>
            <person name="Chu M.L."/>
            <person name="Sasaki T."/>
        </authorList>
    </citation>
    <scope>INTERACTION WITH EFEMP2</scope>
</reference>
<reference key="6">
    <citation type="journal article" date="2009" name="Nat. Biotechnol.">
        <title>Mass-spectrometric identification and relative quantification of N-linked cell surface glycoproteins.</title>
        <authorList>
            <person name="Wollscheid B."/>
            <person name="Bausch-Fluck D."/>
            <person name="Henderson C."/>
            <person name="O'Brien R."/>
            <person name="Bibel M."/>
            <person name="Schiess R."/>
            <person name="Aebersold R."/>
            <person name="Watts J.D."/>
        </authorList>
    </citation>
    <scope>GLYCOSYLATION [LARGE SCALE ANALYSIS] AT ASN-681</scope>
</reference>
<reference key="7">
    <citation type="journal article" date="2010" name="Cell">
        <title>A tissue-specific atlas of mouse protein phosphorylation and expression.</title>
        <authorList>
            <person name="Huttlin E.L."/>
            <person name="Jedrychowski M.P."/>
            <person name="Elias J.E."/>
            <person name="Goswami T."/>
            <person name="Rad R."/>
            <person name="Beausoleil S.A."/>
            <person name="Villen J."/>
            <person name="Haas W."/>
            <person name="Sowa M.E."/>
            <person name="Gygi S.P."/>
        </authorList>
    </citation>
    <scope>IDENTIFICATION BY MASS SPECTROMETRY [LARGE SCALE ANALYSIS]</scope>
    <source>
        <tissue>Brown adipose tissue</tissue>
        <tissue>Heart</tissue>
        <tissue>Kidney</tissue>
        <tissue>Lung</tissue>
    </source>
</reference>
<reference key="8">
    <citation type="journal article" date="2014" name="Mol. Cell. Proteomics">
        <title>Immunoaffinity enrichment and mass spectrometry analysis of protein methylation.</title>
        <authorList>
            <person name="Guo A."/>
            <person name="Gu H."/>
            <person name="Zhou J."/>
            <person name="Mulhern D."/>
            <person name="Wang Y."/>
            <person name="Lee K.A."/>
            <person name="Yang V."/>
            <person name="Aguiar M."/>
            <person name="Kornhauser J."/>
            <person name="Jia X."/>
            <person name="Ren J."/>
            <person name="Beausoleil S.A."/>
            <person name="Silva J.C."/>
            <person name="Vemulapalli V."/>
            <person name="Bedford M.T."/>
            <person name="Comb M.J."/>
        </authorList>
    </citation>
    <scope>METHYLATION [LARGE SCALE ANALYSIS] AT ARG-1336</scope>
    <scope>IDENTIFICATION BY MASS SPECTROMETRY [LARGE SCALE ANALYSIS]</scope>
    <source>
        <tissue>Embryo</tissue>
    </source>
</reference>
<organism>
    <name type="scientific">Mus musculus</name>
    <name type="common">Mouse</name>
    <dbReference type="NCBI Taxonomy" id="10090"/>
    <lineage>
        <taxon>Eukaryota</taxon>
        <taxon>Metazoa</taxon>
        <taxon>Chordata</taxon>
        <taxon>Craniata</taxon>
        <taxon>Vertebrata</taxon>
        <taxon>Euteleostomi</taxon>
        <taxon>Mammalia</taxon>
        <taxon>Eutheria</taxon>
        <taxon>Euarchontoglires</taxon>
        <taxon>Glires</taxon>
        <taxon>Rodentia</taxon>
        <taxon>Myomorpha</taxon>
        <taxon>Muroidea</taxon>
        <taxon>Muridae</taxon>
        <taxon>Murinae</taxon>
        <taxon>Mus</taxon>
        <taxon>Mus</taxon>
    </lineage>
</organism>
<dbReference type="EMBL" id="AB017202">
    <property type="protein sequence ID" value="BAA32609.1"/>
    <property type="molecule type" value="mRNA"/>
</dbReference>
<dbReference type="EMBL" id="CH466613">
    <property type="protein sequence ID" value="EDL01537.1"/>
    <property type="molecule type" value="Genomic_DNA"/>
</dbReference>
<dbReference type="EMBL" id="BC054746">
    <property type="protein sequence ID" value="AAH54746.1"/>
    <property type="molecule type" value="mRNA"/>
</dbReference>
<dbReference type="EMBL" id="BC057016">
    <property type="protein sequence ID" value="AAH57016.1"/>
    <property type="molecule type" value="mRNA"/>
</dbReference>
<dbReference type="CCDS" id="CCDS36813.1"/>
<dbReference type="RefSeq" id="NP_032721.2">
    <property type="nucleotide sequence ID" value="NM_008695.2"/>
</dbReference>
<dbReference type="SMR" id="O88322"/>
<dbReference type="BioGRID" id="201771">
    <property type="interactions" value="11"/>
</dbReference>
<dbReference type="FunCoup" id="O88322">
    <property type="interactions" value="282"/>
</dbReference>
<dbReference type="STRING" id="10090.ENSMUSP00000022340"/>
<dbReference type="GlyCosmos" id="O88322">
    <property type="glycosylation" value="4 sites, No reported glycans"/>
</dbReference>
<dbReference type="GlyGen" id="O88322">
    <property type="glycosylation" value="8 sites, 2 N-linked glycans (2 sites)"/>
</dbReference>
<dbReference type="iPTMnet" id="O88322"/>
<dbReference type="PhosphoSitePlus" id="O88322"/>
<dbReference type="SwissPalm" id="O88322"/>
<dbReference type="jPOST" id="O88322"/>
<dbReference type="PaxDb" id="10090-ENSMUSP00000022340"/>
<dbReference type="PeptideAtlas" id="O88322"/>
<dbReference type="ProteomicsDB" id="252965"/>
<dbReference type="Pumba" id="O88322"/>
<dbReference type="Antibodypedia" id="10737">
    <property type="antibodies" value="167 antibodies from 30 providers"/>
</dbReference>
<dbReference type="DNASU" id="18074"/>
<dbReference type="Ensembl" id="ENSMUST00000022340.5">
    <property type="protein sequence ID" value="ENSMUSP00000022340.4"/>
    <property type="gene ID" value="ENSMUSG00000021806.5"/>
</dbReference>
<dbReference type="GeneID" id="18074"/>
<dbReference type="KEGG" id="mmu:18074"/>
<dbReference type="UCSC" id="uc007siu.1">
    <property type="organism name" value="mouse"/>
</dbReference>
<dbReference type="AGR" id="MGI:1298229"/>
<dbReference type="CTD" id="22795"/>
<dbReference type="MGI" id="MGI:1298229">
    <property type="gene designation" value="Nid2"/>
</dbReference>
<dbReference type="VEuPathDB" id="HostDB:ENSMUSG00000021806"/>
<dbReference type="eggNOG" id="KOG1214">
    <property type="taxonomic scope" value="Eukaryota"/>
</dbReference>
<dbReference type="GeneTree" id="ENSGT00940000157901"/>
<dbReference type="HOGENOM" id="CLU_003163_1_0_1"/>
<dbReference type="InParanoid" id="O88322"/>
<dbReference type="OMA" id="TCEHNHG"/>
<dbReference type="OrthoDB" id="6375837at2759"/>
<dbReference type="PhylomeDB" id="O88322"/>
<dbReference type="TreeFam" id="TF320666"/>
<dbReference type="Reactome" id="R-MMU-3000157">
    <property type="pathway name" value="Laminin interactions"/>
</dbReference>
<dbReference type="BioGRID-ORCS" id="18074">
    <property type="hits" value="0 hits in 79 CRISPR screens"/>
</dbReference>
<dbReference type="ChiTaRS" id="Nid2">
    <property type="organism name" value="mouse"/>
</dbReference>
<dbReference type="PRO" id="PR:O88322"/>
<dbReference type="Proteomes" id="UP000000589">
    <property type="component" value="Chromosome 14"/>
</dbReference>
<dbReference type="RNAct" id="O88322">
    <property type="molecule type" value="protein"/>
</dbReference>
<dbReference type="Bgee" id="ENSMUSG00000021806">
    <property type="expression patterns" value="Expressed in humerus cartilage element and 233 other cell types or tissues"/>
</dbReference>
<dbReference type="ExpressionAtlas" id="O88322">
    <property type="expression patterns" value="baseline and differential"/>
</dbReference>
<dbReference type="GO" id="GO:0005604">
    <property type="term" value="C:basement membrane"/>
    <property type="evidence" value="ECO:0000314"/>
    <property type="project" value="MGI"/>
</dbReference>
<dbReference type="GO" id="GO:0009986">
    <property type="term" value="C:cell surface"/>
    <property type="evidence" value="ECO:0007669"/>
    <property type="project" value="Ensembl"/>
</dbReference>
<dbReference type="GO" id="GO:0062023">
    <property type="term" value="C:collagen-containing extracellular matrix"/>
    <property type="evidence" value="ECO:0007005"/>
    <property type="project" value="UniProtKB"/>
</dbReference>
<dbReference type="GO" id="GO:0031012">
    <property type="term" value="C:extracellular matrix"/>
    <property type="evidence" value="ECO:0000314"/>
    <property type="project" value="MGI"/>
</dbReference>
<dbReference type="GO" id="GO:0005576">
    <property type="term" value="C:extracellular region"/>
    <property type="evidence" value="ECO:0000304"/>
    <property type="project" value="Reactome"/>
</dbReference>
<dbReference type="GO" id="GO:0005886">
    <property type="term" value="C:plasma membrane"/>
    <property type="evidence" value="ECO:0007669"/>
    <property type="project" value="Ensembl"/>
</dbReference>
<dbReference type="GO" id="GO:0005509">
    <property type="term" value="F:calcium ion binding"/>
    <property type="evidence" value="ECO:0007669"/>
    <property type="project" value="InterPro"/>
</dbReference>
<dbReference type="GO" id="GO:0007160">
    <property type="term" value="P:cell-matrix adhesion"/>
    <property type="evidence" value="ECO:0000314"/>
    <property type="project" value="MGI"/>
</dbReference>
<dbReference type="CDD" id="cd00054">
    <property type="entry name" value="EGF_CA"/>
    <property type="match status" value="3"/>
</dbReference>
<dbReference type="CDD" id="cd00255">
    <property type="entry name" value="nidG2"/>
    <property type="match status" value="1"/>
</dbReference>
<dbReference type="CDD" id="cd00191">
    <property type="entry name" value="TY"/>
    <property type="match status" value="2"/>
</dbReference>
<dbReference type="FunFam" id="2.10.25.10:FF:000270">
    <property type="entry name" value="Nidogen 1"/>
    <property type="match status" value="1"/>
</dbReference>
<dbReference type="FunFam" id="2.10.25.10:FF:000281">
    <property type="entry name" value="Nidogen 1"/>
    <property type="match status" value="1"/>
</dbReference>
<dbReference type="FunFam" id="2.120.10.30:FF:000030">
    <property type="entry name" value="Nidogen 1"/>
    <property type="match status" value="1"/>
</dbReference>
<dbReference type="FunFam" id="2.40.155.10:FF:000001">
    <property type="entry name" value="Nidogen 1"/>
    <property type="match status" value="1"/>
</dbReference>
<dbReference type="FunFam" id="2.10.25.10:FF:000519">
    <property type="entry name" value="Nidogen 2"/>
    <property type="match status" value="1"/>
</dbReference>
<dbReference type="FunFam" id="4.10.800.10:FF:000007">
    <property type="entry name" value="Nidogen 2"/>
    <property type="match status" value="1"/>
</dbReference>
<dbReference type="Gene3D" id="2.40.155.10">
    <property type="entry name" value="Green fluorescent protein"/>
    <property type="match status" value="1"/>
</dbReference>
<dbReference type="Gene3D" id="2.10.25.10">
    <property type="entry name" value="Laminin"/>
    <property type="match status" value="4"/>
</dbReference>
<dbReference type="Gene3D" id="4.10.800.10">
    <property type="entry name" value="Thyroglobulin type-1"/>
    <property type="match status" value="2"/>
</dbReference>
<dbReference type="Gene3D" id="2.120.10.30">
    <property type="entry name" value="TolB, C-terminal domain"/>
    <property type="match status" value="1"/>
</dbReference>
<dbReference type="InterPro" id="IPR011042">
    <property type="entry name" value="6-blade_b-propeller_TolB-like"/>
</dbReference>
<dbReference type="InterPro" id="IPR050778">
    <property type="entry name" value="Cueball_EGF_LRP_Nidogen"/>
</dbReference>
<dbReference type="InterPro" id="IPR001881">
    <property type="entry name" value="EGF-like_Ca-bd_dom"/>
</dbReference>
<dbReference type="InterPro" id="IPR000742">
    <property type="entry name" value="EGF-like_dom"/>
</dbReference>
<dbReference type="InterPro" id="IPR000152">
    <property type="entry name" value="EGF-type_Asp/Asn_hydroxyl_site"/>
</dbReference>
<dbReference type="InterPro" id="IPR018097">
    <property type="entry name" value="EGF_Ca-bd_CS"/>
</dbReference>
<dbReference type="InterPro" id="IPR006605">
    <property type="entry name" value="G2_nidogen/fibulin_G2F"/>
</dbReference>
<dbReference type="InterPro" id="IPR009017">
    <property type="entry name" value="GFP"/>
</dbReference>
<dbReference type="InterPro" id="IPR009030">
    <property type="entry name" value="Growth_fac_rcpt_cys_sf"/>
</dbReference>
<dbReference type="InterPro" id="IPR000033">
    <property type="entry name" value="LDLR_classB_rpt"/>
</dbReference>
<dbReference type="InterPro" id="IPR003886">
    <property type="entry name" value="NIDO_dom"/>
</dbReference>
<dbReference type="InterPro" id="IPR049883">
    <property type="entry name" value="NOTCH1_EGF-like"/>
</dbReference>
<dbReference type="InterPro" id="IPR000716">
    <property type="entry name" value="Thyroglobulin_1"/>
</dbReference>
<dbReference type="InterPro" id="IPR036857">
    <property type="entry name" value="Thyroglobulin_1_sf"/>
</dbReference>
<dbReference type="PANTHER" id="PTHR46513:SF15">
    <property type="entry name" value="NIDOGEN 2"/>
    <property type="match status" value="1"/>
</dbReference>
<dbReference type="PANTHER" id="PTHR46513">
    <property type="entry name" value="VITELLOGENIN RECEPTOR-LIKE PROTEIN-RELATED-RELATED"/>
    <property type="match status" value="1"/>
</dbReference>
<dbReference type="Pfam" id="PF07645">
    <property type="entry name" value="EGF_CA"/>
    <property type="match status" value="2"/>
</dbReference>
<dbReference type="Pfam" id="PF07474">
    <property type="entry name" value="G2F"/>
    <property type="match status" value="1"/>
</dbReference>
<dbReference type="Pfam" id="PF00058">
    <property type="entry name" value="Ldl_recept_b"/>
    <property type="match status" value="2"/>
</dbReference>
<dbReference type="Pfam" id="PF06119">
    <property type="entry name" value="NIDO"/>
    <property type="match status" value="1"/>
</dbReference>
<dbReference type="Pfam" id="PF00086">
    <property type="entry name" value="Thyroglobulin_1"/>
    <property type="match status" value="2"/>
</dbReference>
<dbReference type="SMART" id="SM00181">
    <property type="entry name" value="EGF"/>
    <property type="match status" value="5"/>
</dbReference>
<dbReference type="SMART" id="SM00179">
    <property type="entry name" value="EGF_CA"/>
    <property type="match status" value="5"/>
</dbReference>
<dbReference type="SMART" id="SM00682">
    <property type="entry name" value="G2F"/>
    <property type="match status" value="1"/>
</dbReference>
<dbReference type="SMART" id="SM00135">
    <property type="entry name" value="LY"/>
    <property type="match status" value="4"/>
</dbReference>
<dbReference type="SMART" id="SM00539">
    <property type="entry name" value="NIDO"/>
    <property type="match status" value="1"/>
</dbReference>
<dbReference type="SMART" id="SM00211">
    <property type="entry name" value="TY"/>
    <property type="match status" value="2"/>
</dbReference>
<dbReference type="SUPFAM" id="SSF57196">
    <property type="entry name" value="EGF/Laminin"/>
    <property type="match status" value="1"/>
</dbReference>
<dbReference type="SUPFAM" id="SSF54511">
    <property type="entry name" value="GFP-like"/>
    <property type="match status" value="1"/>
</dbReference>
<dbReference type="SUPFAM" id="SSF57184">
    <property type="entry name" value="Growth factor receptor domain"/>
    <property type="match status" value="1"/>
</dbReference>
<dbReference type="SUPFAM" id="SSF57610">
    <property type="entry name" value="Thyroglobulin type-1 domain"/>
    <property type="match status" value="2"/>
</dbReference>
<dbReference type="SUPFAM" id="SSF63825">
    <property type="entry name" value="YWTD domain"/>
    <property type="match status" value="1"/>
</dbReference>
<dbReference type="PROSITE" id="PS00010">
    <property type="entry name" value="ASX_HYDROXYL"/>
    <property type="match status" value="3"/>
</dbReference>
<dbReference type="PROSITE" id="PS01186">
    <property type="entry name" value="EGF_2"/>
    <property type="match status" value="4"/>
</dbReference>
<dbReference type="PROSITE" id="PS50026">
    <property type="entry name" value="EGF_3"/>
    <property type="match status" value="5"/>
</dbReference>
<dbReference type="PROSITE" id="PS01187">
    <property type="entry name" value="EGF_CA"/>
    <property type="match status" value="2"/>
</dbReference>
<dbReference type="PROSITE" id="PS51120">
    <property type="entry name" value="LDLRB"/>
    <property type="match status" value="4"/>
</dbReference>
<dbReference type="PROSITE" id="PS51220">
    <property type="entry name" value="NIDO"/>
    <property type="match status" value="1"/>
</dbReference>
<dbReference type="PROSITE" id="PS50993">
    <property type="entry name" value="NIDOGEN_G2"/>
    <property type="match status" value="1"/>
</dbReference>
<dbReference type="PROSITE" id="PS00484">
    <property type="entry name" value="THYROGLOBULIN_1_1"/>
    <property type="match status" value="2"/>
</dbReference>
<dbReference type="PROSITE" id="PS51162">
    <property type="entry name" value="THYROGLOBULIN_1_2"/>
    <property type="match status" value="2"/>
</dbReference>